<comment type="function">
    <text evidence="1">Part of a membrane-bound complex that couples electron transfer with translocation of ions across the membrane.</text>
</comment>
<comment type="cofactor">
    <cofactor evidence="1">
        <name>[4Fe-4S] cluster</name>
        <dbReference type="ChEBI" id="CHEBI:49883"/>
    </cofactor>
    <text evidence="1">Binds 3 [4Fe-4S] clusters.</text>
</comment>
<comment type="subunit">
    <text evidence="1">The complex is composed of six subunits: RnfA, RnfB, RnfC, RnfD, RnfE and RnfG.</text>
</comment>
<comment type="subcellular location">
    <subcellularLocation>
        <location evidence="1">Cell inner membrane</location>
    </subcellularLocation>
</comment>
<comment type="similarity">
    <text evidence="1">Belongs to the 4Fe4S bacterial-type ferredoxin family. RnfB subfamily.</text>
</comment>
<dbReference type="EC" id="7.-.-.-" evidence="1"/>
<dbReference type="EMBL" id="BA000003">
    <property type="protein sequence ID" value="BAB12832.1"/>
    <property type="molecule type" value="Genomic_DNA"/>
</dbReference>
<dbReference type="RefSeq" id="NP_239946.1">
    <property type="nucleotide sequence ID" value="NC_002528.1"/>
</dbReference>
<dbReference type="RefSeq" id="WP_010895952.1">
    <property type="nucleotide sequence ID" value="NC_002528.1"/>
</dbReference>
<dbReference type="SMR" id="P57214"/>
<dbReference type="STRING" id="563178.BUAP5A_112"/>
<dbReference type="EnsemblBacteria" id="BAB12832">
    <property type="protein sequence ID" value="BAB12832"/>
    <property type="gene ID" value="BAB12832"/>
</dbReference>
<dbReference type="KEGG" id="buc:BU114"/>
<dbReference type="PATRIC" id="fig|107806.10.peg.121"/>
<dbReference type="eggNOG" id="COG2878">
    <property type="taxonomic scope" value="Bacteria"/>
</dbReference>
<dbReference type="HOGENOM" id="CLU_063448_2_0_6"/>
<dbReference type="BioCyc" id="BAPH107806:GBZJ-113-MONOMER"/>
<dbReference type="Proteomes" id="UP000001806">
    <property type="component" value="Chromosome"/>
</dbReference>
<dbReference type="GO" id="GO:0005886">
    <property type="term" value="C:plasma membrane"/>
    <property type="evidence" value="ECO:0007669"/>
    <property type="project" value="UniProtKB-SubCell"/>
</dbReference>
<dbReference type="GO" id="GO:0051539">
    <property type="term" value="F:4 iron, 4 sulfur cluster binding"/>
    <property type="evidence" value="ECO:0007669"/>
    <property type="project" value="UniProtKB-UniRule"/>
</dbReference>
<dbReference type="GO" id="GO:0009055">
    <property type="term" value="F:electron transfer activity"/>
    <property type="evidence" value="ECO:0007669"/>
    <property type="project" value="InterPro"/>
</dbReference>
<dbReference type="GO" id="GO:0046872">
    <property type="term" value="F:metal ion binding"/>
    <property type="evidence" value="ECO:0007669"/>
    <property type="project" value="UniProtKB-KW"/>
</dbReference>
<dbReference type="GO" id="GO:0022900">
    <property type="term" value="P:electron transport chain"/>
    <property type="evidence" value="ECO:0007669"/>
    <property type="project" value="UniProtKB-UniRule"/>
</dbReference>
<dbReference type="Gene3D" id="3.30.70.20">
    <property type="match status" value="1"/>
</dbReference>
<dbReference type="Gene3D" id="1.10.15.40">
    <property type="entry name" value="Electron transport complex subunit B, putative Fe-S cluster"/>
    <property type="match status" value="1"/>
</dbReference>
<dbReference type="HAMAP" id="MF_00463">
    <property type="entry name" value="RsxB_RnfB"/>
    <property type="match status" value="1"/>
</dbReference>
<dbReference type="InterPro" id="IPR007202">
    <property type="entry name" value="4Fe-4S_dom"/>
</dbReference>
<dbReference type="InterPro" id="IPR017896">
    <property type="entry name" value="4Fe4S_Fe-S-bd"/>
</dbReference>
<dbReference type="InterPro" id="IPR017900">
    <property type="entry name" value="4Fe4S_Fe_S_CS"/>
</dbReference>
<dbReference type="InterPro" id="IPR010207">
    <property type="entry name" value="Elect_transpt_cplx_RnfB/RsxB"/>
</dbReference>
<dbReference type="InterPro" id="IPR016463">
    <property type="entry name" value="RnfB/RsxB_Proteobac"/>
</dbReference>
<dbReference type="InterPro" id="IPR050294">
    <property type="entry name" value="RnfB_subfamily"/>
</dbReference>
<dbReference type="NCBIfam" id="TIGR01944">
    <property type="entry name" value="rnfB"/>
    <property type="match status" value="1"/>
</dbReference>
<dbReference type="PANTHER" id="PTHR42859:SF3">
    <property type="entry name" value="ION-TRANSLOCATING OXIDOREDUCTASE COMPLEX SUBUNIT B"/>
    <property type="match status" value="1"/>
</dbReference>
<dbReference type="PANTHER" id="PTHR42859">
    <property type="entry name" value="OXIDOREDUCTASE"/>
    <property type="match status" value="1"/>
</dbReference>
<dbReference type="Pfam" id="PF14697">
    <property type="entry name" value="Fer4_21"/>
    <property type="match status" value="1"/>
</dbReference>
<dbReference type="Pfam" id="PF04060">
    <property type="entry name" value="FeS"/>
    <property type="match status" value="1"/>
</dbReference>
<dbReference type="PIRSF" id="PIRSF005784">
    <property type="entry name" value="Elect_transpt_RnfB"/>
    <property type="match status" value="1"/>
</dbReference>
<dbReference type="SUPFAM" id="SSF54862">
    <property type="entry name" value="4Fe-4S ferredoxins"/>
    <property type="match status" value="1"/>
</dbReference>
<dbReference type="PROSITE" id="PS51656">
    <property type="entry name" value="4FE4S"/>
    <property type="match status" value="1"/>
</dbReference>
<dbReference type="PROSITE" id="PS00198">
    <property type="entry name" value="4FE4S_FER_1"/>
    <property type="match status" value="2"/>
</dbReference>
<dbReference type="PROSITE" id="PS51379">
    <property type="entry name" value="4FE4S_FER_2"/>
    <property type="match status" value="2"/>
</dbReference>
<reference key="1">
    <citation type="journal article" date="2000" name="Nature">
        <title>Genome sequence of the endocellular bacterial symbiont of aphids Buchnera sp. APS.</title>
        <authorList>
            <person name="Shigenobu S."/>
            <person name="Watanabe H."/>
            <person name="Hattori M."/>
            <person name="Sakaki Y."/>
            <person name="Ishikawa H."/>
        </authorList>
    </citation>
    <scope>NUCLEOTIDE SEQUENCE [LARGE SCALE GENOMIC DNA]</scope>
    <source>
        <strain>APS</strain>
    </source>
</reference>
<gene>
    <name evidence="1" type="primary">rnfB</name>
    <name type="ordered locus">BU114</name>
</gene>
<organism>
    <name type="scientific">Buchnera aphidicola subsp. Acyrthosiphon pisum (strain APS)</name>
    <name type="common">Acyrthosiphon pisum symbiotic bacterium</name>
    <dbReference type="NCBI Taxonomy" id="107806"/>
    <lineage>
        <taxon>Bacteria</taxon>
        <taxon>Pseudomonadati</taxon>
        <taxon>Pseudomonadota</taxon>
        <taxon>Gammaproteobacteria</taxon>
        <taxon>Enterobacterales</taxon>
        <taxon>Erwiniaceae</taxon>
        <taxon>Buchnera</taxon>
    </lineage>
</organism>
<proteinExistence type="inferred from homology"/>
<sequence length="167" mass="18333">MITLIIFSFLSFLLGIILSFTAYKFRSQEDPIVAIVNELLPQSQCAQCGYSGCYPYAKAIVENSEKINKCIPGGTDLISAISSVLSIEVPEKNLIITHKKQKNNTVLINESNCVGCSKCASFCPVDAIVGAPNFIHTVLQEFCTGCNICLLHCPTNCIEIKKETYEE</sequence>
<protein>
    <recommendedName>
        <fullName evidence="1">Ion-translocating oxidoreductase complex subunit B</fullName>
        <ecNumber evidence="1">7.-.-.-</ecNumber>
    </recommendedName>
    <alternativeName>
        <fullName evidence="1">Rnf electron transport complex subunit B</fullName>
    </alternativeName>
</protein>
<keyword id="KW-0004">4Fe-4S</keyword>
<keyword id="KW-0997">Cell inner membrane</keyword>
<keyword id="KW-1003">Cell membrane</keyword>
<keyword id="KW-0249">Electron transport</keyword>
<keyword id="KW-0408">Iron</keyword>
<keyword id="KW-0411">Iron-sulfur</keyword>
<keyword id="KW-0472">Membrane</keyword>
<keyword id="KW-0479">Metal-binding</keyword>
<keyword id="KW-1185">Reference proteome</keyword>
<keyword id="KW-0677">Repeat</keyword>
<keyword id="KW-1278">Translocase</keyword>
<keyword id="KW-0813">Transport</keyword>
<evidence type="ECO:0000255" key="1">
    <source>
        <dbReference type="HAMAP-Rule" id="MF_00463"/>
    </source>
</evidence>
<feature type="chain" id="PRO_0000216268" description="Ion-translocating oxidoreductase complex subunit B">
    <location>
        <begin position="1"/>
        <end position="167"/>
    </location>
</feature>
<feature type="domain" description="4Fe-4S" evidence="1">
    <location>
        <begin position="28"/>
        <end position="87"/>
    </location>
</feature>
<feature type="domain" description="4Fe-4S ferredoxin-type 1" evidence="1">
    <location>
        <begin position="104"/>
        <end position="133"/>
    </location>
</feature>
<feature type="domain" description="4Fe-4S ferredoxin-type 2" evidence="1">
    <location>
        <begin position="134"/>
        <end position="163"/>
    </location>
</feature>
<feature type="region of interest" description="Hydrophobic" evidence="1">
    <location>
        <begin position="1"/>
        <end position="22"/>
    </location>
</feature>
<feature type="binding site" evidence="1">
    <location>
        <position position="45"/>
    </location>
    <ligand>
        <name>[4Fe-4S] cluster</name>
        <dbReference type="ChEBI" id="CHEBI:49883"/>
        <label>1</label>
    </ligand>
</feature>
<feature type="binding site" evidence="1">
    <location>
        <position position="48"/>
    </location>
    <ligand>
        <name>[4Fe-4S] cluster</name>
        <dbReference type="ChEBI" id="CHEBI:49883"/>
        <label>1</label>
    </ligand>
</feature>
<feature type="binding site" evidence="1">
    <location>
        <position position="53"/>
    </location>
    <ligand>
        <name>[4Fe-4S] cluster</name>
        <dbReference type="ChEBI" id="CHEBI:49883"/>
        <label>1</label>
    </ligand>
</feature>
<feature type="binding site" evidence="1">
    <location>
        <position position="70"/>
    </location>
    <ligand>
        <name>[4Fe-4S] cluster</name>
        <dbReference type="ChEBI" id="CHEBI:49883"/>
        <label>1</label>
    </ligand>
</feature>
<feature type="binding site" evidence="1">
    <location>
        <position position="113"/>
    </location>
    <ligand>
        <name>[4Fe-4S] cluster</name>
        <dbReference type="ChEBI" id="CHEBI:49883"/>
        <label>2</label>
    </ligand>
</feature>
<feature type="binding site" evidence="1">
    <location>
        <position position="116"/>
    </location>
    <ligand>
        <name>[4Fe-4S] cluster</name>
        <dbReference type="ChEBI" id="CHEBI:49883"/>
        <label>2</label>
    </ligand>
</feature>
<feature type="binding site" evidence="1">
    <location>
        <position position="119"/>
    </location>
    <ligand>
        <name>[4Fe-4S] cluster</name>
        <dbReference type="ChEBI" id="CHEBI:49883"/>
        <label>2</label>
    </ligand>
</feature>
<feature type="binding site" evidence="1">
    <location>
        <position position="123"/>
    </location>
    <ligand>
        <name>[4Fe-4S] cluster</name>
        <dbReference type="ChEBI" id="CHEBI:49883"/>
        <label>3</label>
    </ligand>
</feature>
<feature type="binding site" evidence="1">
    <location>
        <position position="143"/>
    </location>
    <ligand>
        <name>[4Fe-4S] cluster</name>
        <dbReference type="ChEBI" id="CHEBI:49883"/>
        <label>3</label>
    </ligand>
</feature>
<feature type="binding site" evidence="1">
    <location>
        <position position="146"/>
    </location>
    <ligand>
        <name>[4Fe-4S] cluster</name>
        <dbReference type="ChEBI" id="CHEBI:49883"/>
        <label>3</label>
    </ligand>
</feature>
<feature type="binding site" evidence="1">
    <location>
        <position position="149"/>
    </location>
    <ligand>
        <name>[4Fe-4S] cluster</name>
        <dbReference type="ChEBI" id="CHEBI:49883"/>
        <label>3</label>
    </ligand>
</feature>
<feature type="binding site" evidence="1">
    <location>
        <position position="153"/>
    </location>
    <ligand>
        <name>[4Fe-4S] cluster</name>
        <dbReference type="ChEBI" id="CHEBI:49883"/>
        <label>2</label>
    </ligand>
</feature>
<accession>P57214</accession>
<name>RNFB_BUCAI</name>